<reference key="1">
    <citation type="journal article" date="2001" name="Lancet">
        <title>Whole genome sequencing of meticillin-resistant Staphylococcus aureus.</title>
        <authorList>
            <person name="Kuroda M."/>
            <person name="Ohta T."/>
            <person name="Uchiyama I."/>
            <person name="Baba T."/>
            <person name="Yuzawa H."/>
            <person name="Kobayashi I."/>
            <person name="Cui L."/>
            <person name="Oguchi A."/>
            <person name="Aoki K."/>
            <person name="Nagai Y."/>
            <person name="Lian J.-Q."/>
            <person name="Ito T."/>
            <person name="Kanamori M."/>
            <person name="Matsumaru H."/>
            <person name="Maruyama A."/>
            <person name="Murakami H."/>
            <person name="Hosoyama A."/>
            <person name="Mizutani-Ui Y."/>
            <person name="Takahashi N.K."/>
            <person name="Sawano T."/>
            <person name="Inoue R."/>
            <person name="Kaito C."/>
            <person name="Sekimizu K."/>
            <person name="Hirakawa H."/>
            <person name="Kuhara S."/>
            <person name="Goto S."/>
            <person name="Yabuzaki J."/>
            <person name="Kanehisa M."/>
            <person name="Yamashita A."/>
            <person name="Oshima K."/>
            <person name="Furuya K."/>
            <person name="Yoshino C."/>
            <person name="Shiba T."/>
            <person name="Hattori M."/>
            <person name="Ogasawara N."/>
            <person name="Hayashi H."/>
            <person name="Hiramatsu K."/>
        </authorList>
    </citation>
    <scope>NUCLEOTIDE SEQUENCE [LARGE SCALE GENOMIC DNA]</scope>
    <source>
        <strain>N315</strain>
    </source>
</reference>
<reference key="2">
    <citation type="journal article" date="2005" name="J. Microbiol. Methods">
        <title>Correlation of proteomic and transcriptomic profiles of Staphylococcus aureus during the post-exponential phase of growth.</title>
        <authorList>
            <person name="Scherl A."/>
            <person name="Francois P."/>
            <person name="Bento M."/>
            <person name="Deshusses J.M."/>
            <person name="Charbonnier Y."/>
            <person name="Converset V."/>
            <person name="Huyghe A."/>
            <person name="Walter N."/>
            <person name="Hoogland C."/>
            <person name="Appel R.D."/>
            <person name="Sanchez J.-C."/>
            <person name="Zimmermann-Ivol C.G."/>
            <person name="Corthals G.L."/>
            <person name="Hochstrasser D.F."/>
            <person name="Schrenzel J."/>
        </authorList>
    </citation>
    <scope>IDENTIFICATION BY MASS SPECTROMETRY</scope>
    <source>
        <strain>N315</strain>
    </source>
</reference>
<reference key="3">
    <citation type="submission" date="2007-10" db="UniProtKB">
        <title>Shotgun proteomic analysis of total and membrane protein extracts of S. aureus strain N315.</title>
        <authorList>
            <person name="Vaezzadeh A.R."/>
            <person name="Deshusses J."/>
            <person name="Lescuyer P."/>
            <person name="Hochstrasser D.F."/>
        </authorList>
    </citation>
    <scope>IDENTIFICATION BY MASS SPECTROMETRY [LARGE SCALE ANALYSIS]</scope>
    <source>
        <strain>N315</strain>
    </source>
</reference>
<evidence type="ECO:0000250" key="1"/>
<evidence type="ECO:0000250" key="2">
    <source>
        <dbReference type="UniProtKB" id="P19938"/>
    </source>
</evidence>
<evidence type="ECO:0000305" key="3"/>
<comment type="function">
    <text evidence="1">Acts on the D-isomers of alanine, leucine, aspartate, glutamate, aminobutyrate, norvaline and asparagine. The enzyme transfers an amino group from a substrate D-amino acid to the pyridoxal phosphate cofactor to form pyridoxamine and an alpha-keto acid in the first half-reaction. The second half-reaction is the reverse of the first, transferring the amino group from the pyridoxamine to a second alpha-keto acid to form the product D-amino acid via a ping-pong mechanism. This is an important process in the formation of D-alanine and D-glutamate, which are essential bacterial cell wall components (By similarity).</text>
</comment>
<comment type="catalytic activity">
    <reaction>
        <text>D-alanine + 2-oxoglutarate = D-glutamate + pyruvate</text>
        <dbReference type="Rhea" id="RHEA:15869"/>
        <dbReference type="ChEBI" id="CHEBI:15361"/>
        <dbReference type="ChEBI" id="CHEBI:16810"/>
        <dbReference type="ChEBI" id="CHEBI:29986"/>
        <dbReference type="ChEBI" id="CHEBI:57416"/>
        <dbReference type="EC" id="2.6.1.21"/>
    </reaction>
</comment>
<comment type="cofactor">
    <cofactor evidence="1">
        <name>pyridoxal 5'-phosphate</name>
        <dbReference type="ChEBI" id="CHEBI:597326"/>
    </cofactor>
</comment>
<comment type="subunit">
    <text evidence="1">Homodimer.</text>
</comment>
<comment type="similarity">
    <text evidence="3">Belongs to the class-IV pyridoxal-phosphate-dependent aminotransferase family.</text>
</comment>
<name>DAAA_STAAN</name>
<organism>
    <name type="scientific">Staphylococcus aureus (strain N315)</name>
    <dbReference type="NCBI Taxonomy" id="158879"/>
    <lineage>
        <taxon>Bacteria</taxon>
        <taxon>Bacillati</taxon>
        <taxon>Bacillota</taxon>
        <taxon>Bacilli</taxon>
        <taxon>Bacillales</taxon>
        <taxon>Staphylococcaceae</taxon>
        <taxon>Staphylococcus</taxon>
    </lineage>
</organism>
<proteinExistence type="evidence at protein level"/>
<dbReference type="EC" id="2.6.1.21"/>
<dbReference type="EMBL" id="BA000018">
    <property type="protein sequence ID" value="BAB42839.1"/>
    <property type="molecule type" value="Genomic_DNA"/>
</dbReference>
<dbReference type="PIR" id="B89960">
    <property type="entry name" value="B89960"/>
</dbReference>
<dbReference type="RefSeq" id="WP_000411084.1">
    <property type="nucleotide sequence ID" value="NC_002745.2"/>
</dbReference>
<dbReference type="SMR" id="P99090"/>
<dbReference type="EnsemblBacteria" id="BAB42839">
    <property type="protein sequence ID" value="BAB42839"/>
    <property type="gene ID" value="BAB42839"/>
</dbReference>
<dbReference type="KEGG" id="sau:SA1571"/>
<dbReference type="HOGENOM" id="CLU_020844_4_1_9"/>
<dbReference type="GO" id="GO:0005829">
    <property type="term" value="C:cytosol"/>
    <property type="evidence" value="ECO:0007669"/>
    <property type="project" value="TreeGrafter"/>
</dbReference>
<dbReference type="GO" id="GO:0047810">
    <property type="term" value="F:D-alanine-2-oxoglutarate aminotransferase activity"/>
    <property type="evidence" value="ECO:0000250"/>
    <property type="project" value="UniProtKB"/>
</dbReference>
<dbReference type="GO" id="GO:0030170">
    <property type="term" value="F:pyridoxal phosphate binding"/>
    <property type="evidence" value="ECO:0000250"/>
    <property type="project" value="UniProtKB"/>
</dbReference>
<dbReference type="GO" id="GO:0046437">
    <property type="term" value="P:D-amino acid biosynthetic process"/>
    <property type="evidence" value="ECO:0000250"/>
    <property type="project" value="UniProtKB"/>
</dbReference>
<dbReference type="GO" id="GO:0019478">
    <property type="term" value="P:D-amino acid catabolic process"/>
    <property type="evidence" value="ECO:0000250"/>
    <property type="project" value="UniProtKB"/>
</dbReference>
<dbReference type="CDD" id="cd01558">
    <property type="entry name" value="D-AAT_like"/>
    <property type="match status" value="1"/>
</dbReference>
<dbReference type="FunFam" id="3.20.10.10:FF:000002">
    <property type="entry name" value="D-alanine aminotransferase"/>
    <property type="match status" value="1"/>
</dbReference>
<dbReference type="FunFam" id="3.30.470.10:FF:000009">
    <property type="entry name" value="D-alanine aminotransferase"/>
    <property type="match status" value="1"/>
</dbReference>
<dbReference type="Gene3D" id="3.30.470.10">
    <property type="match status" value="1"/>
</dbReference>
<dbReference type="Gene3D" id="3.20.10.10">
    <property type="entry name" value="D-amino Acid Aminotransferase, subunit A, domain 2"/>
    <property type="match status" value="1"/>
</dbReference>
<dbReference type="InterPro" id="IPR001544">
    <property type="entry name" value="Aminotrans_IV"/>
</dbReference>
<dbReference type="InterPro" id="IPR018300">
    <property type="entry name" value="Aminotrans_IV_CS"/>
</dbReference>
<dbReference type="InterPro" id="IPR036038">
    <property type="entry name" value="Aminotransferase-like"/>
</dbReference>
<dbReference type="InterPro" id="IPR043132">
    <property type="entry name" value="BCAT-like_C"/>
</dbReference>
<dbReference type="InterPro" id="IPR043131">
    <property type="entry name" value="BCAT-like_N"/>
</dbReference>
<dbReference type="InterPro" id="IPR050571">
    <property type="entry name" value="Class-IV_PLP-Dep_Aminotrnsfr"/>
</dbReference>
<dbReference type="InterPro" id="IPR005784">
    <property type="entry name" value="D_amino_transT"/>
</dbReference>
<dbReference type="NCBIfam" id="TIGR01121">
    <property type="entry name" value="D_amino_aminoT"/>
    <property type="match status" value="1"/>
</dbReference>
<dbReference type="PANTHER" id="PTHR42743">
    <property type="entry name" value="AMINO-ACID AMINOTRANSFERASE"/>
    <property type="match status" value="1"/>
</dbReference>
<dbReference type="PANTHER" id="PTHR42743:SF10">
    <property type="entry name" value="D-ALANINE AMINOTRANSFERASE"/>
    <property type="match status" value="1"/>
</dbReference>
<dbReference type="Pfam" id="PF01063">
    <property type="entry name" value="Aminotran_4"/>
    <property type="match status" value="1"/>
</dbReference>
<dbReference type="SUPFAM" id="SSF56752">
    <property type="entry name" value="D-aminoacid aminotransferase-like PLP-dependent enzymes"/>
    <property type="match status" value="1"/>
</dbReference>
<dbReference type="PROSITE" id="PS00770">
    <property type="entry name" value="AA_TRANSFER_CLASS_4"/>
    <property type="match status" value="1"/>
</dbReference>
<gene>
    <name type="primary">dat</name>
    <name type="ordered locus">SA1571</name>
</gene>
<sequence>MEKIFLNGEFVSPSEAKVSYNDRGYVFGDGIYEYIRVYNGKLFTVTEHYERFLRSANEIGLDLNYSVEELIELSRKLVDMNQIETGAIYIQATRGVAERNHSFPTPEVEPAIVAYTKSYDRPYDHLENGVNGVTVEDIRWLRCDIKSLNLLGNVLAKEYAVKYNAVEAIQHRGETVTEGSSSNAYAIKDGVIYTHPINNYILNGITRIVIKKIAEDYNIPFKEETFTVDFLKNADEVIVSSTSAEVTPVIKLDGEPINDGKVGPITRQLQEGFEKYIESHSI</sequence>
<accession>P99090</accession>
<accession>Q99TB4</accession>
<protein>
    <recommendedName>
        <fullName>D-alanine aminotransferase</fullName>
        <ecNumber>2.6.1.21</ecNumber>
    </recommendedName>
    <alternativeName>
        <fullName>D-amino acid aminotransferase</fullName>
    </alternativeName>
    <alternativeName>
        <fullName>D-amino acid transaminase</fullName>
        <shortName>DAAT</shortName>
    </alternativeName>
    <alternativeName>
        <fullName>D-aspartate aminotransferase</fullName>
    </alternativeName>
</protein>
<feature type="chain" id="PRO_0000103255" description="D-alanine aminotransferase">
    <location>
        <begin position="1"/>
        <end position="282"/>
    </location>
</feature>
<feature type="active site" description="Proton acceptor" evidence="2">
    <location>
        <position position="146"/>
    </location>
</feature>
<feature type="binding site" evidence="2">
    <location>
        <position position="32"/>
    </location>
    <ligand>
        <name>substrate</name>
    </ligand>
</feature>
<feature type="binding site" evidence="2">
    <location>
        <position position="51"/>
    </location>
    <ligand>
        <name>pyridoxal 5'-phosphate</name>
        <dbReference type="ChEBI" id="CHEBI:597326"/>
    </ligand>
</feature>
<feature type="binding site" evidence="2">
    <location>
        <position position="99"/>
    </location>
    <ligand>
        <name>substrate</name>
    </ligand>
</feature>
<feature type="binding site" evidence="2">
    <location>
        <position position="101"/>
    </location>
    <ligand>
        <name>substrate</name>
    </ligand>
</feature>
<feature type="binding site" evidence="2">
    <location>
        <position position="178"/>
    </location>
    <ligand>
        <name>pyridoxal 5'-phosphate</name>
        <dbReference type="ChEBI" id="CHEBI:597326"/>
    </ligand>
</feature>
<feature type="modified residue" description="N6-(pyridoxal phosphate)lysine" evidence="2">
    <location>
        <position position="146"/>
    </location>
</feature>
<keyword id="KW-0032">Aminotransferase</keyword>
<keyword id="KW-0663">Pyridoxal phosphate</keyword>
<keyword id="KW-0808">Transferase</keyword>